<dbReference type="EC" id="2.7.11.24"/>
<dbReference type="EMBL" id="AF195773">
    <property type="protein sequence ID" value="AAG28463.2"/>
    <property type="molecule type" value="Genomic_DNA"/>
</dbReference>
<dbReference type="EMBL" id="EF137429">
    <property type="protein sequence ID" value="ABL85065.1"/>
    <property type="molecule type" value="mRNA"/>
</dbReference>
<dbReference type="EMBL" id="DQ402476">
    <property type="protein sequence ID" value="ABD64614.1"/>
    <property type="molecule type" value="mRNA"/>
</dbReference>
<dbReference type="EMBL" id="AACD01000080">
    <property type="protein sequence ID" value="EAA60710.1"/>
    <property type="status" value="ALT_SEQ"/>
    <property type="molecule type" value="Genomic_DNA"/>
</dbReference>
<dbReference type="EMBL" id="BN001303">
    <property type="protein sequence ID" value="CBF77037.1"/>
    <property type="status" value="ALT_SEQ"/>
    <property type="molecule type" value="Genomic_DNA"/>
</dbReference>
<dbReference type="RefSeq" id="XP_662272.1">
    <property type="nucleotide sequence ID" value="XM_657180.1"/>
</dbReference>
<dbReference type="SMR" id="Q9HG11"/>
<dbReference type="STRING" id="227321.Q9HG11"/>
<dbReference type="GeneID" id="2872468"/>
<dbReference type="KEGG" id="ani:ANIA_04668"/>
<dbReference type="VEuPathDB" id="FungiDB:AN4668"/>
<dbReference type="eggNOG" id="KOG0660">
    <property type="taxonomic scope" value="Eukaryota"/>
</dbReference>
<dbReference type="HOGENOM" id="CLU_000288_181_1_1"/>
<dbReference type="InParanoid" id="Q9HG11"/>
<dbReference type="OrthoDB" id="192887at2759"/>
<dbReference type="Proteomes" id="UP000000560">
    <property type="component" value="Chromosome III"/>
</dbReference>
<dbReference type="GO" id="GO:0005737">
    <property type="term" value="C:cytoplasm"/>
    <property type="evidence" value="ECO:0000318"/>
    <property type="project" value="GO_Central"/>
</dbReference>
<dbReference type="GO" id="GO:0005634">
    <property type="term" value="C:nucleus"/>
    <property type="evidence" value="ECO:0000318"/>
    <property type="project" value="GO_Central"/>
</dbReference>
<dbReference type="GO" id="GO:0005524">
    <property type="term" value="F:ATP binding"/>
    <property type="evidence" value="ECO:0007669"/>
    <property type="project" value="UniProtKB-KW"/>
</dbReference>
<dbReference type="GO" id="GO:0004707">
    <property type="term" value="F:MAP kinase activity"/>
    <property type="evidence" value="ECO:0000247"/>
    <property type="project" value="AspGD"/>
</dbReference>
<dbReference type="GO" id="GO:0106310">
    <property type="term" value="F:protein serine kinase activity"/>
    <property type="evidence" value="ECO:0007669"/>
    <property type="project" value="RHEA"/>
</dbReference>
<dbReference type="GO" id="GO:0004674">
    <property type="term" value="F:protein serine/threonine kinase activity"/>
    <property type="evidence" value="ECO:0000318"/>
    <property type="project" value="GO_Central"/>
</dbReference>
<dbReference type="GO" id="GO:0071474">
    <property type="term" value="P:cellular hyperosmotic response"/>
    <property type="evidence" value="ECO:0000247"/>
    <property type="project" value="AspGD"/>
</dbReference>
<dbReference type="GO" id="GO:0034599">
    <property type="term" value="P:cellular response to oxidative stress"/>
    <property type="evidence" value="ECO:0000318"/>
    <property type="project" value="GO_Central"/>
</dbReference>
<dbReference type="GO" id="GO:0007231">
    <property type="term" value="P:osmosensory signaling pathway"/>
    <property type="evidence" value="ECO:0000318"/>
    <property type="project" value="GO_Central"/>
</dbReference>
<dbReference type="GO" id="GO:0038066">
    <property type="term" value="P:p38MAPK cascade"/>
    <property type="evidence" value="ECO:0000247"/>
    <property type="project" value="AspGD"/>
</dbReference>
<dbReference type="GO" id="GO:0051403">
    <property type="term" value="P:stress-activated MAPK cascade"/>
    <property type="evidence" value="ECO:0000318"/>
    <property type="project" value="GO_Central"/>
</dbReference>
<dbReference type="FunFam" id="1.10.510.10:FF:000049">
    <property type="entry name" value="Mitogen-activated protein kinase"/>
    <property type="match status" value="1"/>
</dbReference>
<dbReference type="FunFam" id="3.30.200.20:FF:000046">
    <property type="entry name" value="Mitogen-activated protein kinase"/>
    <property type="match status" value="1"/>
</dbReference>
<dbReference type="Gene3D" id="3.30.200.20">
    <property type="entry name" value="Phosphorylase Kinase, domain 1"/>
    <property type="match status" value="1"/>
</dbReference>
<dbReference type="Gene3D" id="1.10.510.10">
    <property type="entry name" value="Transferase(Phosphotransferase) domain 1"/>
    <property type="match status" value="1"/>
</dbReference>
<dbReference type="InterPro" id="IPR011009">
    <property type="entry name" value="Kinase-like_dom_sf"/>
</dbReference>
<dbReference type="InterPro" id="IPR050117">
    <property type="entry name" value="MAP_kinase"/>
</dbReference>
<dbReference type="InterPro" id="IPR003527">
    <property type="entry name" value="MAP_kinase_CS"/>
</dbReference>
<dbReference type="InterPro" id="IPR000719">
    <property type="entry name" value="Prot_kinase_dom"/>
</dbReference>
<dbReference type="InterPro" id="IPR008271">
    <property type="entry name" value="Ser/Thr_kinase_AS"/>
</dbReference>
<dbReference type="PANTHER" id="PTHR24055">
    <property type="entry name" value="MITOGEN-ACTIVATED PROTEIN KINASE"/>
    <property type="match status" value="1"/>
</dbReference>
<dbReference type="Pfam" id="PF00069">
    <property type="entry name" value="Pkinase"/>
    <property type="match status" value="1"/>
</dbReference>
<dbReference type="SMART" id="SM00220">
    <property type="entry name" value="S_TKc"/>
    <property type="match status" value="1"/>
</dbReference>
<dbReference type="SUPFAM" id="SSF56112">
    <property type="entry name" value="Protein kinase-like (PK-like)"/>
    <property type="match status" value="1"/>
</dbReference>
<dbReference type="PROSITE" id="PS01351">
    <property type="entry name" value="MAPK"/>
    <property type="match status" value="1"/>
</dbReference>
<dbReference type="PROSITE" id="PS50011">
    <property type="entry name" value="PROTEIN_KINASE_DOM"/>
    <property type="match status" value="1"/>
</dbReference>
<dbReference type="PROSITE" id="PS00108">
    <property type="entry name" value="PROTEIN_KINASE_ST"/>
    <property type="match status" value="1"/>
</dbReference>
<feature type="chain" id="PRO_0000289717" description="Mitogen-activated protein kinase mpkC">
    <location>
        <begin position="1"/>
        <end position="415"/>
    </location>
</feature>
<feature type="domain" description="Protein kinase" evidence="2">
    <location>
        <begin position="20"/>
        <end position="299"/>
    </location>
</feature>
<feature type="short sequence motif" description="TXY">
    <location>
        <begin position="171"/>
        <end position="173"/>
    </location>
</feature>
<feature type="active site" description="Proton acceptor" evidence="2 3">
    <location>
        <position position="141"/>
    </location>
</feature>
<feature type="binding site" evidence="2">
    <location>
        <begin position="26"/>
        <end position="34"/>
    </location>
    <ligand>
        <name>ATP</name>
        <dbReference type="ChEBI" id="CHEBI:30616"/>
    </ligand>
</feature>
<feature type="binding site" evidence="2">
    <location>
        <position position="49"/>
    </location>
    <ligand>
        <name>ATP</name>
        <dbReference type="ChEBI" id="CHEBI:30616"/>
    </ligand>
</feature>
<feature type="modified residue" description="Phosphothreonine" evidence="1">
    <location>
        <position position="171"/>
    </location>
</feature>
<feature type="modified residue" description="Phosphotyrosine" evidence="1">
    <location>
        <position position="173"/>
    </location>
</feature>
<accession>Q9HG11</accession>
<accession>C8VB11</accession>
<accession>Q208R0</accession>
<accession>Q5B462</accession>
<protein>
    <recommendedName>
        <fullName>Mitogen-activated protein kinase mpkC</fullName>
        <shortName>MAP kinase C</shortName>
        <ecNumber>2.7.11.24</ecNumber>
    </recommendedName>
</protein>
<sequence length="415" mass="46990">MAEFIRSDILGTTFETTSRYANLQPVGLGTAGVVCSAYDLISEQVVAIKKMMKPFHSTSVAKRTYREVKLLRHLRHDNLINMSDIFISPLEDVYLVTELLGTDLHRLLNGKPLESKFAQYFTYQILRGLKYIHSAGVIHRDLKPGNLLINENCDLKICDFGLARVQEPQMTGYVSTRYYRAPEIMLTWQRYGSKVDLWSVGCILAEMLLGRPLFPGTDHINQFWLITDLLGNPPDEVIDRITTNNTRRVVKSMAKRNPRPLKEILPAAEDAALNLLDNLLVFDPDRRISAEQGLMHPWMAPYHDPTDEPVATEQFDWSFNDADLPLDTWKIMIYSEVLDFFQLTTNAEPSGEQSQNQSQSQSQAFTSSQDLQLASMLNLGEGELLPDFAATIDPNKFGSVDYLMDGQSLDPNSFS</sequence>
<reference key="1">
    <citation type="submission" date="1999-10" db="EMBL/GenBank/DDBJ databases">
        <title>Isolation of a gene encoding a MAPK homolog from Aspergillus nidulans.</title>
        <authorList>
            <person name="Jahng K.-Y."/>
            <person name="Lee S.-J."/>
            <person name="Park H.-J."/>
            <person name="Chae K.-S."/>
            <person name="Han D.M."/>
        </authorList>
    </citation>
    <scope>NUCLEOTIDE SEQUENCE [GENOMIC DNA]</scope>
    <source>
        <strain>FGSC A4 / ATCC 38163 / CBS 112.46 / NRRL 194 / M139</strain>
    </source>
</reference>
<reference key="2">
    <citation type="submission" date="2006-11" db="EMBL/GenBank/DDBJ databases">
        <title>Isolation of a gene encoding a MAPK homolog from Aspergillus nidulans.</title>
        <authorList>
            <person name="Im Y.-E."/>
            <person name="Lee S.-J."/>
            <person name="Jahng K.-Y."/>
        </authorList>
    </citation>
    <scope>NUCLEOTIDE SEQUENCE [MRNA]</scope>
</reference>
<reference key="3">
    <citation type="journal article" date="2006" name="Eukaryot. Cell">
        <title>Novel mitogen-activated protein kinase MpkC of Aspergillus fumigatus is required for utilization of polyalcohol sugars.</title>
        <authorList>
            <person name="Reyes G."/>
            <person name="Romans A."/>
            <person name="Nguyen C.K."/>
            <person name="May G.S."/>
        </authorList>
    </citation>
    <scope>NUCLEOTIDE SEQUENCE [MRNA]</scope>
</reference>
<reference key="4">
    <citation type="journal article" date="2005" name="Nature">
        <title>Sequencing of Aspergillus nidulans and comparative analysis with A. fumigatus and A. oryzae.</title>
        <authorList>
            <person name="Galagan J.E."/>
            <person name="Calvo S.E."/>
            <person name="Cuomo C."/>
            <person name="Ma L.-J."/>
            <person name="Wortman J.R."/>
            <person name="Batzoglou S."/>
            <person name="Lee S.-I."/>
            <person name="Bastuerkmen M."/>
            <person name="Spevak C.C."/>
            <person name="Clutterbuck J."/>
            <person name="Kapitonov V."/>
            <person name="Jurka J."/>
            <person name="Scazzocchio C."/>
            <person name="Farman M.L."/>
            <person name="Butler J."/>
            <person name="Purcell S."/>
            <person name="Harris S."/>
            <person name="Braus G.H."/>
            <person name="Draht O."/>
            <person name="Busch S."/>
            <person name="D'Enfert C."/>
            <person name="Bouchier C."/>
            <person name="Goldman G.H."/>
            <person name="Bell-Pedersen D."/>
            <person name="Griffiths-Jones S."/>
            <person name="Doonan J.H."/>
            <person name="Yu J."/>
            <person name="Vienken K."/>
            <person name="Pain A."/>
            <person name="Freitag M."/>
            <person name="Selker E.U."/>
            <person name="Archer D.B."/>
            <person name="Penalva M.A."/>
            <person name="Oakley B.R."/>
            <person name="Momany M."/>
            <person name="Tanaka T."/>
            <person name="Kumagai T."/>
            <person name="Asai K."/>
            <person name="Machida M."/>
            <person name="Nierman W.C."/>
            <person name="Denning D.W."/>
            <person name="Caddick M.X."/>
            <person name="Hynes M."/>
            <person name="Paoletti M."/>
            <person name="Fischer R."/>
            <person name="Miller B.L."/>
            <person name="Dyer P.S."/>
            <person name="Sachs M.S."/>
            <person name="Osmani S.A."/>
            <person name="Birren B.W."/>
        </authorList>
    </citation>
    <scope>NUCLEOTIDE SEQUENCE [LARGE SCALE GENOMIC DNA]</scope>
    <source>
        <strain>FGSC A4 / ATCC 38163 / CBS 112.46 / NRRL 194 / M139</strain>
    </source>
</reference>
<reference key="5">
    <citation type="journal article" date="2009" name="Fungal Genet. Biol.">
        <title>The 2008 update of the Aspergillus nidulans genome annotation: a community effort.</title>
        <authorList>
            <person name="Wortman J.R."/>
            <person name="Gilsenan J.M."/>
            <person name="Joardar V."/>
            <person name="Deegan J."/>
            <person name="Clutterbuck J."/>
            <person name="Andersen M.R."/>
            <person name="Archer D."/>
            <person name="Bencina M."/>
            <person name="Braus G."/>
            <person name="Coutinho P."/>
            <person name="von Dohren H."/>
            <person name="Doonan J."/>
            <person name="Driessen A.J."/>
            <person name="Durek P."/>
            <person name="Espeso E."/>
            <person name="Fekete E."/>
            <person name="Flipphi M."/>
            <person name="Estrada C.G."/>
            <person name="Geysens S."/>
            <person name="Goldman G."/>
            <person name="de Groot P.W."/>
            <person name="Hansen K."/>
            <person name="Harris S.D."/>
            <person name="Heinekamp T."/>
            <person name="Helmstaedt K."/>
            <person name="Henrissat B."/>
            <person name="Hofmann G."/>
            <person name="Homan T."/>
            <person name="Horio T."/>
            <person name="Horiuchi H."/>
            <person name="James S."/>
            <person name="Jones M."/>
            <person name="Karaffa L."/>
            <person name="Karanyi Z."/>
            <person name="Kato M."/>
            <person name="Keller N."/>
            <person name="Kelly D.E."/>
            <person name="Kiel J.A."/>
            <person name="Kim J.M."/>
            <person name="van der Klei I.J."/>
            <person name="Klis F.M."/>
            <person name="Kovalchuk A."/>
            <person name="Krasevec N."/>
            <person name="Kubicek C.P."/>
            <person name="Liu B."/>
            <person name="Maccabe A."/>
            <person name="Meyer V."/>
            <person name="Mirabito P."/>
            <person name="Miskei M."/>
            <person name="Mos M."/>
            <person name="Mullins J."/>
            <person name="Nelson D.R."/>
            <person name="Nielsen J."/>
            <person name="Oakley B.R."/>
            <person name="Osmani S.A."/>
            <person name="Pakula T."/>
            <person name="Paszewski A."/>
            <person name="Paulsen I."/>
            <person name="Pilsyk S."/>
            <person name="Pocsi I."/>
            <person name="Punt P.J."/>
            <person name="Ram A.F."/>
            <person name="Ren Q."/>
            <person name="Robellet X."/>
            <person name="Robson G."/>
            <person name="Seiboth B."/>
            <person name="van Solingen P."/>
            <person name="Specht T."/>
            <person name="Sun J."/>
            <person name="Taheri-Talesh N."/>
            <person name="Takeshita N."/>
            <person name="Ussery D."/>
            <person name="vanKuyk P.A."/>
            <person name="Visser H."/>
            <person name="van de Vondervoort P.J."/>
            <person name="de Vries R.P."/>
            <person name="Walton J."/>
            <person name="Xiang X."/>
            <person name="Xiong Y."/>
            <person name="Zeng A.P."/>
            <person name="Brandt B.W."/>
            <person name="Cornell M.J."/>
            <person name="van den Hondel C.A."/>
            <person name="Visser J."/>
            <person name="Oliver S.G."/>
            <person name="Turner G."/>
        </authorList>
    </citation>
    <scope>GENOME REANNOTATION</scope>
    <source>
        <strain>FGSC A4 / ATCC 38163 / CBS 112.46 / NRRL 194 / M139</strain>
    </source>
</reference>
<proteinExistence type="evidence at transcript level"/>
<evidence type="ECO:0000250" key="1"/>
<evidence type="ECO:0000255" key="2">
    <source>
        <dbReference type="PROSITE-ProRule" id="PRU00159"/>
    </source>
</evidence>
<evidence type="ECO:0000255" key="3">
    <source>
        <dbReference type="PROSITE-ProRule" id="PRU10027"/>
    </source>
</evidence>
<evidence type="ECO:0000305" key="4"/>
<name>MPKC_EMENI</name>
<gene>
    <name type="primary">mpkC</name>
    <name type="ORF">AN4668</name>
</gene>
<organism>
    <name type="scientific">Emericella nidulans (strain FGSC A4 / ATCC 38163 / CBS 112.46 / NRRL 194 / M139)</name>
    <name type="common">Aspergillus nidulans</name>
    <dbReference type="NCBI Taxonomy" id="227321"/>
    <lineage>
        <taxon>Eukaryota</taxon>
        <taxon>Fungi</taxon>
        <taxon>Dikarya</taxon>
        <taxon>Ascomycota</taxon>
        <taxon>Pezizomycotina</taxon>
        <taxon>Eurotiomycetes</taxon>
        <taxon>Eurotiomycetidae</taxon>
        <taxon>Eurotiales</taxon>
        <taxon>Aspergillaceae</taxon>
        <taxon>Aspergillus</taxon>
        <taxon>Aspergillus subgen. Nidulantes</taxon>
    </lineage>
</organism>
<keyword id="KW-0067">ATP-binding</keyword>
<keyword id="KW-0418">Kinase</keyword>
<keyword id="KW-0547">Nucleotide-binding</keyword>
<keyword id="KW-0597">Phosphoprotein</keyword>
<keyword id="KW-1185">Reference proteome</keyword>
<keyword id="KW-0723">Serine/threonine-protein kinase</keyword>
<keyword id="KW-0808">Transferase</keyword>
<comment type="function">
    <text evidence="1">Mitogen-activated protein kinase required for growth on media where sorbitol or mannitol is the sole carbon source.</text>
</comment>
<comment type="catalytic activity">
    <reaction>
        <text>L-seryl-[protein] + ATP = O-phospho-L-seryl-[protein] + ADP + H(+)</text>
        <dbReference type="Rhea" id="RHEA:17989"/>
        <dbReference type="Rhea" id="RHEA-COMP:9863"/>
        <dbReference type="Rhea" id="RHEA-COMP:11604"/>
        <dbReference type="ChEBI" id="CHEBI:15378"/>
        <dbReference type="ChEBI" id="CHEBI:29999"/>
        <dbReference type="ChEBI" id="CHEBI:30616"/>
        <dbReference type="ChEBI" id="CHEBI:83421"/>
        <dbReference type="ChEBI" id="CHEBI:456216"/>
        <dbReference type="EC" id="2.7.11.24"/>
    </reaction>
</comment>
<comment type="catalytic activity">
    <reaction>
        <text>L-threonyl-[protein] + ATP = O-phospho-L-threonyl-[protein] + ADP + H(+)</text>
        <dbReference type="Rhea" id="RHEA:46608"/>
        <dbReference type="Rhea" id="RHEA-COMP:11060"/>
        <dbReference type="Rhea" id="RHEA-COMP:11605"/>
        <dbReference type="ChEBI" id="CHEBI:15378"/>
        <dbReference type="ChEBI" id="CHEBI:30013"/>
        <dbReference type="ChEBI" id="CHEBI:30616"/>
        <dbReference type="ChEBI" id="CHEBI:61977"/>
        <dbReference type="ChEBI" id="CHEBI:456216"/>
        <dbReference type="EC" id="2.7.11.24"/>
    </reaction>
</comment>
<comment type="cofactor">
    <cofactor evidence="1">
        <name>Mg(2+)</name>
        <dbReference type="ChEBI" id="CHEBI:18420"/>
    </cofactor>
</comment>
<comment type="activity regulation">
    <text evidence="1">Activated by tyrosine and threonine phosphorylation.</text>
</comment>
<comment type="domain">
    <text>The TXY motif contains the threonine and tyrosine residues whose phosphorylation activates the MAP kinases.</text>
</comment>
<comment type="PTM">
    <text evidence="1">Dually phosphorylated on Thr-171 and Tyr-173, which activates the enzyme.</text>
</comment>
<comment type="similarity">
    <text evidence="2">Belongs to the protein kinase superfamily. Ser/Thr protein kinase family. MAP kinase subfamily. HOG1 sub-subfamily.</text>
</comment>
<comment type="sequence caution" evidence="4">
    <conflict type="erroneous gene model prediction">
        <sequence resource="EMBL-CDS" id="CBF77037"/>
    </conflict>
</comment>
<comment type="sequence caution" evidence="4">
    <conflict type="erroneous gene model prediction">
        <sequence resource="EMBL-CDS" id="EAA60710"/>
    </conflict>
</comment>